<protein>
    <recommendedName>
        <fullName>Putative neurobeachin homolog</fullName>
    </recommendedName>
    <alternativeName>
        <fullName>Suppressor enhancer of lin-12</fullName>
    </alternativeName>
</protein>
<name>NBEA_CAEEL</name>
<dbReference type="EMBL" id="Z35598">
    <property type="protein sequence ID" value="CCO25913.1"/>
    <property type="molecule type" value="Genomic_DNA"/>
</dbReference>
<dbReference type="EMBL" id="Z46242">
    <property type="protein sequence ID" value="CCO25913.1"/>
    <property type="status" value="JOINED"/>
    <property type="molecule type" value="Genomic_DNA"/>
</dbReference>
<dbReference type="PIR" id="T20719">
    <property type="entry name" value="T20719"/>
</dbReference>
<dbReference type="RefSeq" id="NP_497939.2">
    <property type="nucleotide sequence ID" value="NM_065538.5"/>
</dbReference>
<dbReference type="SMR" id="Q19317"/>
<dbReference type="BioGRID" id="40842">
    <property type="interactions" value="4"/>
</dbReference>
<dbReference type="FunCoup" id="Q19317">
    <property type="interactions" value="2750"/>
</dbReference>
<dbReference type="STRING" id="6239.F10F2.1.1"/>
<dbReference type="iPTMnet" id="Q19317"/>
<dbReference type="PaxDb" id="6239-F10F2.1"/>
<dbReference type="PeptideAtlas" id="Q19317"/>
<dbReference type="EnsemblMetazoa" id="F10F2.1a.1">
    <property type="protein sequence ID" value="F10F2.1a.1"/>
    <property type="gene ID" value="WBGene00004760"/>
</dbReference>
<dbReference type="GeneID" id="175606"/>
<dbReference type="KEGG" id="cel:CELE_F10F2.1"/>
<dbReference type="AGR" id="WB:WBGene00004760"/>
<dbReference type="CTD" id="175606"/>
<dbReference type="WormBase" id="F10F2.1a">
    <property type="protein sequence ID" value="CE32621"/>
    <property type="gene ID" value="WBGene00004760"/>
    <property type="gene designation" value="sel-2"/>
</dbReference>
<dbReference type="eggNOG" id="KOG1787">
    <property type="taxonomic scope" value="Eukaryota"/>
</dbReference>
<dbReference type="GeneTree" id="ENSGT00940000170888"/>
<dbReference type="HOGENOM" id="CLU_000218_2_0_1"/>
<dbReference type="InParanoid" id="Q19317"/>
<dbReference type="OMA" id="XRKVEIM"/>
<dbReference type="OrthoDB" id="26681at2759"/>
<dbReference type="PhylomeDB" id="Q19317"/>
<dbReference type="PRO" id="PR:Q19317"/>
<dbReference type="Proteomes" id="UP000001940">
    <property type="component" value="Chromosome III"/>
</dbReference>
<dbReference type="Bgee" id="WBGene00004760">
    <property type="expression patterns" value="Expressed in pharyngeal muscle cell (C elegans) and 4 other cell types or tissues"/>
</dbReference>
<dbReference type="ExpressionAtlas" id="Q19317">
    <property type="expression patterns" value="baseline and differential"/>
</dbReference>
<dbReference type="GO" id="GO:0005737">
    <property type="term" value="C:cytoplasm"/>
    <property type="evidence" value="ECO:0000314"/>
    <property type="project" value="WormBase"/>
</dbReference>
<dbReference type="GO" id="GO:0005829">
    <property type="term" value="C:cytosol"/>
    <property type="evidence" value="ECO:0000318"/>
    <property type="project" value="GO_Central"/>
</dbReference>
<dbReference type="GO" id="GO:0016020">
    <property type="term" value="C:membrane"/>
    <property type="evidence" value="ECO:0000318"/>
    <property type="project" value="GO_Central"/>
</dbReference>
<dbReference type="GO" id="GO:0005634">
    <property type="term" value="C:nucleus"/>
    <property type="evidence" value="ECO:0007669"/>
    <property type="project" value="UniProtKB-SubCell"/>
</dbReference>
<dbReference type="GO" id="GO:0048471">
    <property type="term" value="C:perinuclear region of cytoplasm"/>
    <property type="evidence" value="ECO:0000314"/>
    <property type="project" value="WormBase"/>
</dbReference>
<dbReference type="GO" id="GO:0019901">
    <property type="term" value="F:protein kinase binding"/>
    <property type="evidence" value="ECO:0000318"/>
    <property type="project" value="GO_Central"/>
</dbReference>
<dbReference type="GO" id="GO:0045176">
    <property type="term" value="P:apical protein localization"/>
    <property type="evidence" value="ECO:0000315"/>
    <property type="project" value="WormBase"/>
</dbReference>
<dbReference type="GO" id="GO:0016197">
    <property type="term" value="P:endosomal transport"/>
    <property type="evidence" value="ECO:0000315"/>
    <property type="project" value="WormBase"/>
</dbReference>
<dbReference type="GO" id="GO:0045746">
    <property type="term" value="P:negative regulation of Notch signaling pathway"/>
    <property type="evidence" value="ECO:0000316"/>
    <property type="project" value="WormBase"/>
</dbReference>
<dbReference type="GO" id="GO:0045807">
    <property type="term" value="P:positive regulation of endocytosis"/>
    <property type="evidence" value="ECO:0000315"/>
    <property type="project" value="WormBase"/>
</dbReference>
<dbReference type="GO" id="GO:0008104">
    <property type="term" value="P:protein localization"/>
    <property type="evidence" value="ECO:0000318"/>
    <property type="project" value="GO_Central"/>
</dbReference>
<dbReference type="GO" id="GO:0040028">
    <property type="term" value="P:regulation of vulval development"/>
    <property type="evidence" value="ECO:0000316"/>
    <property type="project" value="WormBase"/>
</dbReference>
<dbReference type="CDD" id="cd06071">
    <property type="entry name" value="Beach"/>
    <property type="match status" value="1"/>
</dbReference>
<dbReference type="CDD" id="cd01201">
    <property type="entry name" value="PH_BEACH"/>
    <property type="match status" value="1"/>
</dbReference>
<dbReference type="FunFam" id="1.10.1540.10:FF:000001">
    <property type="entry name" value="neurobeachin isoform X1"/>
    <property type="match status" value="1"/>
</dbReference>
<dbReference type="FunFam" id="2.60.120.200:FF:000010">
    <property type="entry name" value="neurobeachin isoform X2"/>
    <property type="match status" value="1"/>
</dbReference>
<dbReference type="FunFam" id="2.130.10.10:FF:003490">
    <property type="entry name" value="Putative neurobeachin homolog"/>
    <property type="match status" value="1"/>
</dbReference>
<dbReference type="Gene3D" id="2.60.120.200">
    <property type="match status" value="1"/>
</dbReference>
<dbReference type="Gene3D" id="1.10.1540.10">
    <property type="entry name" value="BEACH domain"/>
    <property type="match status" value="1"/>
</dbReference>
<dbReference type="Gene3D" id="2.30.29.30">
    <property type="entry name" value="Pleckstrin-homology domain (PH domain)/Phosphotyrosine-binding domain (PTB)"/>
    <property type="match status" value="1"/>
</dbReference>
<dbReference type="Gene3D" id="2.130.10.10">
    <property type="entry name" value="YVTN repeat-like/Quinoprotein amine dehydrogenase"/>
    <property type="match status" value="1"/>
</dbReference>
<dbReference type="InterPro" id="IPR016024">
    <property type="entry name" value="ARM-type_fold"/>
</dbReference>
<dbReference type="InterPro" id="IPR000409">
    <property type="entry name" value="BEACH_dom"/>
</dbReference>
<dbReference type="InterPro" id="IPR036372">
    <property type="entry name" value="BEACH_dom_sf"/>
</dbReference>
<dbReference type="InterPro" id="IPR050865">
    <property type="entry name" value="BEACH_Domain"/>
</dbReference>
<dbReference type="InterPro" id="IPR013320">
    <property type="entry name" value="ConA-like_dom_sf"/>
</dbReference>
<dbReference type="InterPro" id="IPR046851">
    <property type="entry name" value="NBCH_WD40"/>
</dbReference>
<dbReference type="InterPro" id="IPR010508">
    <property type="entry name" value="NBEA-like_DUF1088"/>
</dbReference>
<dbReference type="InterPro" id="IPR031570">
    <property type="entry name" value="NBEA/BDCP_DUF4704"/>
</dbReference>
<dbReference type="InterPro" id="IPR046852">
    <property type="entry name" value="Neurobeachin_a-sol"/>
</dbReference>
<dbReference type="InterPro" id="IPR023362">
    <property type="entry name" value="PH-BEACH_dom"/>
</dbReference>
<dbReference type="InterPro" id="IPR011993">
    <property type="entry name" value="PH-like_dom_sf"/>
</dbReference>
<dbReference type="InterPro" id="IPR015943">
    <property type="entry name" value="WD40/YVTN_repeat-like_dom_sf"/>
</dbReference>
<dbReference type="InterPro" id="IPR036322">
    <property type="entry name" value="WD40_repeat_dom_sf"/>
</dbReference>
<dbReference type="InterPro" id="IPR001680">
    <property type="entry name" value="WD40_rpt"/>
</dbReference>
<dbReference type="PANTHER" id="PTHR13743">
    <property type="entry name" value="BEIGE/BEACH-RELATED"/>
    <property type="match status" value="1"/>
</dbReference>
<dbReference type="PANTHER" id="PTHR13743:SF162">
    <property type="entry name" value="NEUROBEACHIN"/>
    <property type="match status" value="1"/>
</dbReference>
<dbReference type="Pfam" id="PF02138">
    <property type="entry name" value="Beach"/>
    <property type="match status" value="1"/>
</dbReference>
<dbReference type="Pfam" id="PF06469">
    <property type="entry name" value="DUF1088"/>
    <property type="match status" value="1"/>
</dbReference>
<dbReference type="Pfam" id="PF15787">
    <property type="entry name" value="DUF4704"/>
    <property type="match status" value="1"/>
</dbReference>
<dbReference type="Pfam" id="PF13385">
    <property type="entry name" value="Laminin_G_3"/>
    <property type="match status" value="1"/>
</dbReference>
<dbReference type="Pfam" id="PF20426">
    <property type="entry name" value="NBCH_WD40"/>
    <property type="match status" value="1"/>
</dbReference>
<dbReference type="Pfam" id="PF20425">
    <property type="entry name" value="Neurobeachin"/>
    <property type="match status" value="1"/>
</dbReference>
<dbReference type="Pfam" id="PF14844">
    <property type="entry name" value="PH_BEACH"/>
    <property type="match status" value="1"/>
</dbReference>
<dbReference type="SMART" id="SM01026">
    <property type="entry name" value="Beach"/>
    <property type="match status" value="1"/>
</dbReference>
<dbReference type="SMART" id="SM00320">
    <property type="entry name" value="WD40"/>
    <property type="match status" value="4"/>
</dbReference>
<dbReference type="SUPFAM" id="SSF48371">
    <property type="entry name" value="ARM repeat"/>
    <property type="match status" value="1"/>
</dbReference>
<dbReference type="SUPFAM" id="SSF81837">
    <property type="entry name" value="BEACH domain"/>
    <property type="match status" value="1"/>
</dbReference>
<dbReference type="SUPFAM" id="SSF49899">
    <property type="entry name" value="Concanavalin A-like lectins/glucanases"/>
    <property type="match status" value="1"/>
</dbReference>
<dbReference type="SUPFAM" id="SSF50729">
    <property type="entry name" value="PH domain-like"/>
    <property type="match status" value="1"/>
</dbReference>
<dbReference type="SUPFAM" id="SSF50978">
    <property type="entry name" value="WD40 repeat-like"/>
    <property type="match status" value="1"/>
</dbReference>
<dbReference type="PROSITE" id="PS50197">
    <property type="entry name" value="BEACH"/>
    <property type="match status" value="1"/>
</dbReference>
<dbReference type="PROSITE" id="PS51783">
    <property type="entry name" value="PH_BEACH"/>
    <property type="match status" value="1"/>
</dbReference>
<dbReference type="PROSITE" id="PS50294">
    <property type="entry name" value="WD_REPEATS_REGION"/>
    <property type="match status" value="1"/>
</dbReference>
<gene>
    <name type="primary">sel-2</name>
    <name type="ORF">F10F2.1</name>
</gene>
<sequence>MEISETSHNESGPPVQENGIVEIPVEEGEEVNDEESNMETVDLGLDDSAADASSPSVFKNIDDEAPGDPSDAAKKEEDSEEIVVPSVLAPTPSQEVSPPNAIESLPPLPEGKELELEDDVTSSLPRLLSKTTLIHSNEEGADETIQRLVTVLHSNSPNTDRTQVVDNLFNLLVGGHFDQESKFVIEDAANVDHMLTLLSHCDYDLQNEIWSLFLAVMKKSNRNLEACTRVGLISKVLDILPEAPPLLADLLVQIIAALVAYSINVKQTKHLLRALKSTKEQWPPNSLKLLHVLKEMPQHDSADVFFSFPGKDQSGIILPPIKTMPYQQGWTFATWLRMEPLNSVTFEKEQPVLYSFRTSKGVGYSCHFTGNCLVVNVEKTKGKEQSRCVRAELGARKWHHIAIAHCYSRWGRSDIKCFIDGQLAETIELSWVVTSATNWDRCSIGVSADGTANSAFCGQMGAMYLFAEALTLQQANSLFCLGPVYQSTFKHDSETSLPEGYKKHLFDGHLHSSLVFAYCPKNCHGQLCLYTPPKTAASTYFVQIPHAVMKEGVEVITTHSIHKSLQSVGGIQILLPLFAQIDLPSSNDNSIDGEVCQTLLSLIALLLSSSQSSQQQLFHSKGFLIISSCLQKASPSHLSMKVLEQLIHIAKFLLRCPAGGPLLKHLFDYILFNPKLWIRARPEVQVHLYQYLATDFLANNNFSQMLRRVPTVIEMCHTLKHFYWLALPQTVSDYTIEERPENFATADIVAIRSSILTFINRIIIASAGPEEEERVRDQEVHTLLNLLATVREDDNLYDVLALVTRLLAEHPAIMIPAIDKNKALGIIFNLLAAPNELIRIPALKILGFFLSRSTLKRKTESMGNQNLFSLIGERLLSHKKVLSLPTYNVLLEILVEQMTPTFTYACHQPAQPEWKFENPHLLKVIAHVISQCEESENIVQIKKCFLIDIINLCRESKENRRTILQMSVWQDWLIGLAYVFHTTESQNEVSELVWEAFSILLHHALRNEYGGWRVWVDTLAIAHSKVSFEKFKRKLAEAKIKAERSESGGEEAKMEPTPIYRAPEFAWSDVHVRLLADLLSGIERVVDEWKVAECGISDQCNASENQVFVGNVVHVVSQLSDSLIMACGGLLPLLASATAPNNDMEIVDPCQQQLPISVSAGFLMRFARLVDTFVLASGVSFSELEQEKNMPAGGVLRQSLRISATVTVRHILASRIQQPDTPRYETNSTKKNQCIMEFVREALEKRSPDGLENVERLVQDSDITRIKGVVYRDMVEENRQAQFLALSVIYLVSVLMVSRYRDILEPPSSPSPFFDSTTQKQENSENVNSETSPENGSNGKLANGGDNLSIKNGIESNGNDGEEEENGEEGQGDDGGRIAAIKVANADMKRGDGNEYDEEELSKMHQSNGRRPSTMMPVQQTAERRAYLTTKLQTALETCAPLLREMMSDFRGYLQKTLLGTHGQEIMNDTKVLETLRNRNASVIELVMLLCSQEWQTSLQKHAGLAFIELVNEGRLMAHATRDHVLRVANEADFILNRLRAEDVSKHAQFEAESREQLAARHEEYGRCDLLIASGRLRDSINATRLLEKMSAILSDQDDSKSGTQFWKLDVWEDDSRRRKRFVPNAYGSRHEEANLPEGEKNEEPEISEQEKIRKVLKGLFSKRQNSSGSHELVDESDIDKWAQEVDPTPSSQSACFSTTAKLIAPGVVVPGTLSVTANDLFFDANESDPNYKKQCAQVLRYCEALHARWNLQEIRAIFLRRYLLQNTALELFLASRTAIMFAFDSEDAVKKVVYQLPRVGVGVKYGLPQSRKTSLMTPRQLFKHSDMCAKWQKREISNFDYLMFLNTVAGRTFNDLSQYPVFPWILTNYTSDTLDLSVASNFRDLSKPIGALSEARRKFFNDRYTSWDDDQVPAFHYGTHYSTPAFTLNWLLRVEPFASMFINLHDGKFDHPDRITHSIKDSWDRCQRDSHDVKELIPELFYLPEMFRNSSKFNLGRRADGTPVDDVVLPPWAESPEHFVLMHRQALESDLVSCQLNQWIDLIFGYKQRGAEAVRATNVFYHLTYEGTVTPKMAETPGQVAAIEQQILSFGQTPSQLLTEAHPPRHSIMSMAPTMFRRHDEDLCMMMKYISNSPVVYLAANTFHQLPQPTVVGVAQNLVFSLNKWDNSYSYGASQRSALSMDPSNAEGQVSLPLTADAQLASAASTTPVARRHLGDAFDQRLTVQCSNFVTTTDSKFIFACGYPDYSFRIVDTDSGRVRQAVYGHGDVVTCIARSETSLFSDCYVVTGSMDCTVVLWHWNGTTGFIAGEYNQPGEVPSPRSILTGHEASISALCVSAEHGLVVSGCEDGVILIHTTSSDLLRRIRGHGIVTQLSMSRECILLSLFDSKRMVTYSATAKKLDEVLVDDKIECVTVTRDGEFAVTGAVNGRINIWRMFPLTKLYTYQPLNSAVRSVAVVASHRFILGGLDSGAIVVFNADFNRWHYEYKHRYIQNTSAAKPVQQSPQK</sequence>
<comment type="function">
    <text evidence="1 6">Binds to type II regulatory subunits of protein kinase A and anchors/targets them to the membrane. May anchor the kinase to cytoskeletal and/or organelle-associated proteins (By similarity). Regulates endosomal traffic in polarized epithelial cells such as the vulval precursor cells and intestinal cells. Thought to act as a negative regulator of lin-12 activity in vulval precursor cells. May have a role in the internalization process from basolateral surface of polarized epithelial cells.</text>
</comment>
<comment type="subunit">
    <text evidence="2">Interacts with RII subunit of PKA.</text>
</comment>
<comment type="subcellular location">
    <subcellularLocation>
        <location evidence="6">Cytoplasm</location>
    </subcellularLocation>
    <subcellularLocation>
        <location evidence="1">Membrane</location>
        <topology evidence="1">Peripheral membrane protein</topology>
    </subcellularLocation>
    <subcellularLocation>
        <location evidence="6">Nucleus</location>
    </subcellularLocation>
</comment>
<comment type="tissue specificity">
    <text evidence="6">Expressed in vulval precursor cells and rectal epithelia in L2 and L3 larvae. In L4 larvae, expression is seen in intestinal epithelial cells.</text>
</comment>
<comment type="disruption phenotype">
    <text evidence="6">Worms lacking sel-2 exhibit a multivulva phenotype when combined with loss of lin-12.</text>
</comment>
<comment type="similarity">
    <text evidence="7">Belongs to the WD repeat neurobeachin family.</text>
</comment>
<evidence type="ECO:0000250" key="1"/>
<evidence type="ECO:0000250" key="2">
    <source>
        <dbReference type="UniProtKB" id="Q9EPN1"/>
    </source>
</evidence>
<evidence type="ECO:0000255" key="3">
    <source>
        <dbReference type="PROSITE-ProRule" id="PRU00026"/>
    </source>
</evidence>
<evidence type="ECO:0000255" key="4">
    <source>
        <dbReference type="PROSITE-ProRule" id="PRU01119"/>
    </source>
</evidence>
<evidence type="ECO:0000256" key="5">
    <source>
        <dbReference type="SAM" id="MobiDB-lite"/>
    </source>
</evidence>
<evidence type="ECO:0000269" key="6">
    <source>
    </source>
</evidence>
<evidence type="ECO:0000305" key="7"/>
<proteinExistence type="evidence at transcript level"/>
<reference key="1">
    <citation type="journal article" date="1998" name="Science">
        <title>Genome sequence of the nematode C. elegans: a platform for investigating biology.</title>
        <authorList>
            <consortium name="The C. elegans sequencing consortium"/>
        </authorList>
    </citation>
    <scope>NUCLEOTIDE SEQUENCE [LARGE SCALE GENOMIC DNA]</scope>
    <source>
        <strain>Bristol N2</strain>
    </source>
</reference>
<reference evidence="7" key="2">
    <citation type="journal article" date="2000" name="J. Neurosci.">
        <title>Neurobeachin: a protein kinase A-anchoring, beige/Chediak-Higashi protein homolog implicated in neuronal membrane traffic.</title>
        <authorList>
            <person name="Wang X."/>
            <person name="Herberg F.W."/>
            <person name="Laue M.M."/>
            <person name="Wullner C."/>
            <person name="Hu B."/>
            <person name="Petrasch-Parwez E."/>
            <person name="Kilimann M.W."/>
        </authorList>
    </citation>
    <scope>IDENTIFICATION</scope>
</reference>
<reference key="3">
    <citation type="journal article" date="2007" name="Development">
        <title>SEL-2, the C. elegans neurobeachin/LRBA homolog, is a negative regulator of lin-12/Notch activity and affects endosomal traffic in polarized epithelial cells.</title>
        <authorList>
            <person name="de Souza N."/>
            <person name="Vallier L.G."/>
            <person name="Fares H."/>
            <person name="Greenwald I."/>
        </authorList>
    </citation>
    <scope>FUNCTION</scope>
    <scope>SUBCELLULAR LOCATION</scope>
    <scope>DISRUPTION PHENOTYPE</scope>
    <scope>TISSUE SPECIFICITY</scope>
</reference>
<accession>Q19317</accession>
<accession>K8ESP0</accession>
<accession>Q20061</accession>
<feature type="chain" id="PRO_0000051092" description="Putative neurobeachin homolog">
    <location>
        <begin position="1"/>
        <end position="2507"/>
    </location>
</feature>
<feature type="domain" description="BEACH-type PH" evidence="4">
    <location>
        <begin position="1690"/>
        <end position="1798"/>
    </location>
</feature>
<feature type="domain" description="BEACH" evidence="3 7">
    <location>
        <begin position="1817"/>
        <end position="2106"/>
    </location>
</feature>
<feature type="repeat" description="WD 1" evidence="7">
    <location>
        <begin position="2265"/>
        <end position="2308"/>
    </location>
</feature>
<feature type="repeat" description="WD 2" evidence="7">
    <location>
        <begin position="2326"/>
        <end position="2365"/>
    </location>
</feature>
<feature type="repeat" description="WD 3" evidence="7">
    <location>
        <begin position="2405"/>
        <end position="2444"/>
    </location>
</feature>
<feature type="repeat" description="WD 4" evidence="7">
    <location>
        <begin position="2447"/>
        <end position="2486"/>
    </location>
</feature>
<feature type="region of interest" description="Disordered" evidence="5">
    <location>
        <begin position="1"/>
        <end position="109"/>
    </location>
</feature>
<feature type="region of interest" description="Disordered" evidence="5">
    <location>
        <begin position="1307"/>
        <end position="1377"/>
    </location>
</feature>
<feature type="region of interest" description="Disordered" evidence="5">
    <location>
        <begin position="1629"/>
        <end position="1649"/>
    </location>
</feature>
<feature type="compositionally biased region" description="Acidic residues" evidence="5">
    <location>
        <begin position="24"/>
        <end position="37"/>
    </location>
</feature>
<feature type="compositionally biased region" description="Polar residues" evidence="5">
    <location>
        <begin position="1317"/>
        <end position="1340"/>
    </location>
</feature>
<feature type="compositionally biased region" description="Acidic residues" evidence="5">
    <location>
        <begin position="1360"/>
        <end position="1372"/>
    </location>
</feature>
<organism>
    <name type="scientific">Caenorhabditis elegans</name>
    <dbReference type="NCBI Taxonomy" id="6239"/>
    <lineage>
        <taxon>Eukaryota</taxon>
        <taxon>Metazoa</taxon>
        <taxon>Ecdysozoa</taxon>
        <taxon>Nematoda</taxon>
        <taxon>Chromadorea</taxon>
        <taxon>Rhabditida</taxon>
        <taxon>Rhabditina</taxon>
        <taxon>Rhabditomorpha</taxon>
        <taxon>Rhabditoidea</taxon>
        <taxon>Rhabditidae</taxon>
        <taxon>Peloderinae</taxon>
        <taxon>Caenorhabditis</taxon>
    </lineage>
</organism>
<keyword id="KW-0963">Cytoplasm</keyword>
<keyword id="KW-0472">Membrane</keyword>
<keyword id="KW-0539">Nucleus</keyword>
<keyword id="KW-1185">Reference proteome</keyword>
<keyword id="KW-0677">Repeat</keyword>
<keyword id="KW-0853">WD repeat</keyword>